<organism>
    <name type="scientific">Acetivibrio thermocellus (strain ATCC 27405 / DSM 1237 / JCM 9322 / NBRC 103400 / NCIMB 10682 / NRRL B-4536 / VPI 7372)</name>
    <name type="common">Clostridium thermocellum</name>
    <dbReference type="NCBI Taxonomy" id="203119"/>
    <lineage>
        <taxon>Bacteria</taxon>
        <taxon>Bacillati</taxon>
        <taxon>Bacillota</taxon>
        <taxon>Clostridia</taxon>
        <taxon>Eubacteriales</taxon>
        <taxon>Oscillospiraceae</taxon>
        <taxon>Acetivibrio</taxon>
    </lineage>
</organism>
<accession>A3DBD5</accession>
<comment type="function">
    <text evidence="1">Catalyzes the decarboxylative condensation of pimeloyl-[acyl-carrier protein] and L-alanine to produce 8-amino-7-oxononanoate (AON), [acyl-carrier protein], and carbon dioxide.</text>
</comment>
<comment type="catalytic activity">
    <reaction>
        <text>6-carboxyhexanoyl-[ACP] + L-alanine + H(+) = (8S)-8-amino-7-oxononanoate + holo-[ACP] + CO2</text>
        <dbReference type="Rhea" id="RHEA:42288"/>
        <dbReference type="Rhea" id="RHEA-COMP:9685"/>
        <dbReference type="Rhea" id="RHEA-COMP:9955"/>
        <dbReference type="ChEBI" id="CHEBI:15378"/>
        <dbReference type="ChEBI" id="CHEBI:16526"/>
        <dbReference type="ChEBI" id="CHEBI:57972"/>
        <dbReference type="ChEBI" id="CHEBI:64479"/>
        <dbReference type="ChEBI" id="CHEBI:78846"/>
        <dbReference type="ChEBI" id="CHEBI:149468"/>
        <dbReference type="EC" id="2.3.1.47"/>
    </reaction>
</comment>
<comment type="cofactor">
    <cofactor evidence="1">
        <name>pyridoxal 5'-phosphate</name>
        <dbReference type="ChEBI" id="CHEBI:597326"/>
    </cofactor>
</comment>
<comment type="pathway">
    <text>Cofactor biosynthesis; biotin biosynthesis.</text>
</comment>
<comment type="subunit">
    <text evidence="1">Homodimer.</text>
</comment>
<comment type="similarity">
    <text evidence="2">Belongs to the class-II pyridoxal-phosphate-dependent aminotransferase family. BioF subfamily.</text>
</comment>
<keyword id="KW-0093">Biotin biosynthesis</keyword>
<keyword id="KW-0663">Pyridoxal phosphate</keyword>
<keyword id="KW-1185">Reference proteome</keyword>
<keyword id="KW-0808">Transferase</keyword>
<gene>
    <name type="primary">bioF</name>
    <name type="ordered locus">Cthe_0022</name>
</gene>
<proteinExistence type="inferred from homology"/>
<reference key="1">
    <citation type="submission" date="2007-02" db="EMBL/GenBank/DDBJ databases">
        <title>Complete sequence of Clostridium thermocellum ATCC 27405.</title>
        <authorList>
            <consortium name="US DOE Joint Genome Institute"/>
            <person name="Copeland A."/>
            <person name="Lucas S."/>
            <person name="Lapidus A."/>
            <person name="Barry K."/>
            <person name="Detter J.C."/>
            <person name="Glavina del Rio T."/>
            <person name="Hammon N."/>
            <person name="Israni S."/>
            <person name="Dalin E."/>
            <person name="Tice H."/>
            <person name="Pitluck S."/>
            <person name="Chertkov O."/>
            <person name="Brettin T."/>
            <person name="Bruce D."/>
            <person name="Han C."/>
            <person name="Tapia R."/>
            <person name="Gilna P."/>
            <person name="Schmutz J."/>
            <person name="Larimer F."/>
            <person name="Land M."/>
            <person name="Hauser L."/>
            <person name="Kyrpides N."/>
            <person name="Mikhailova N."/>
            <person name="Wu J.H.D."/>
            <person name="Newcomb M."/>
            <person name="Richardson P."/>
        </authorList>
    </citation>
    <scope>NUCLEOTIDE SEQUENCE [LARGE SCALE GENOMIC DNA]</scope>
    <source>
        <strain>ATCC 27405 / DSM 1237 / JCM 9322 / NBRC 103400 / NCIMB 10682 / NRRL B-4536 / VPI 7372</strain>
    </source>
</reference>
<sequence>MYDFQGALKDIKNKGLYREFRNVNAAQGPYTVIDGRKMLMMSSNNYLGLCDDIRLKRAAIESIRKFGVGAGGSRLTCGNFELHRELEERLAKFKDVESCIVFGSGYAANIGAISGIADKNWVIFCDRLNHASIVDGIRLSGAKLVVYKHCDMEDLESKIVRYHTGKSLIVTDGVFSMDGDVAPVDRIVKLAKKYNLMTMVDDAHATGILGEKGRGTSEYFGLKDAVDISMGTLSKAFGVEGGFVAGKRKLVDFLRHKAKSFIYSTAPPPHNMAAALEALNIIETEPQARKELAEKSVWLRNRLIEKGFNVPKGVTPIIPLMVGDVNTAVEFSMLLYNEGIYIPAIRPPTVPKGTSRLRISIMASHSYEDMEFALKNLVRFGRKLGIIP</sequence>
<name>BIOF_ACET2</name>
<protein>
    <recommendedName>
        <fullName>Putative 8-amino-7-oxononanoate synthase</fullName>
        <shortName>AONS</shortName>
        <ecNumber>2.3.1.47</ecNumber>
    </recommendedName>
    <alternativeName>
        <fullName>7-keto-8-amino-pelargonic acid synthase</fullName>
        <shortName>7-KAP synthase</shortName>
    </alternativeName>
    <alternativeName>
        <fullName>8-amino-7-ketopelargonate synthase</fullName>
    </alternativeName>
</protein>
<feature type="chain" id="PRO_0000380956" description="Putative 8-amino-7-oxononanoate synthase">
    <location>
        <begin position="1"/>
        <end position="388"/>
    </location>
</feature>
<feature type="binding site" evidence="1">
    <location>
        <position position="18"/>
    </location>
    <ligand>
        <name>substrate</name>
    </ligand>
</feature>
<feature type="binding site" evidence="1">
    <location>
        <begin position="105"/>
        <end position="106"/>
    </location>
    <ligand>
        <name>pyridoxal 5'-phosphate</name>
        <dbReference type="ChEBI" id="CHEBI:597326"/>
    </ligand>
</feature>
<feature type="binding site" evidence="1">
    <location>
        <position position="130"/>
    </location>
    <ligand>
        <name>substrate</name>
    </ligand>
</feature>
<feature type="binding site" evidence="1">
    <location>
        <position position="176"/>
    </location>
    <ligand>
        <name>pyridoxal 5'-phosphate</name>
        <dbReference type="ChEBI" id="CHEBI:597326"/>
    </ligand>
</feature>
<feature type="binding site" evidence="1">
    <location>
        <begin position="201"/>
        <end position="204"/>
    </location>
    <ligand>
        <name>pyridoxal 5'-phosphate</name>
        <dbReference type="ChEBI" id="CHEBI:597326"/>
    </ligand>
</feature>
<feature type="binding site" evidence="1">
    <location>
        <begin position="232"/>
        <end position="235"/>
    </location>
    <ligand>
        <name>pyridoxal 5'-phosphate</name>
        <dbReference type="ChEBI" id="CHEBI:597326"/>
    </ligand>
</feature>
<feature type="binding site" evidence="1">
    <location>
        <position position="349"/>
    </location>
    <ligand>
        <name>substrate</name>
    </ligand>
</feature>
<feature type="modified residue" description="N6-(pyridoxal phosphate)lysine" evidence="1">
    <location>
        <position position="235"/>
    </location>
</feature>
<evidence type="ECO:0000250" key="1"/>
<evidence type="ECO:0000305" key="2"/>
<dbReference type="EC" id="2.3.1.47"/>
<dbReference type="EMBL" id="CP000568">
    <property type="protein sequence ID" value="ABN51264.1"/>
    <property type="molecule type" value="Genomic_DNA"/>
</dbReference>
<dbReference type="RefSeq" id="WP_003511929.1">
    <property type="nucleotide sequence ID" value="NC_009012.1"/>
</dbReference>
<dbReference type="SMR" id="A3DBD5"/>
<dbReference type="STRING" id="203119.Cthe_0022"/>
<dbReference type="GeneID" id="35805660"/>
<dbReference type="KEGG" id="cth:Cthe_0022"/>
<dbReference type="eggNOG" id="COG0156">
    <property type="taxonomic scope" value="Bacteria"/>
</dbReference>
<dbReference type="HOGENOM" id="CLU_015846_11_0_9"/>
<dbReference type="OrthoDB" id="9807157at2"/>
<dbReference type="UniPathway" id="UPA00078"/>
<dbReference type="Proteomes" id="UP000002145">
    <property type="component" value="Chromosome"/>
</dbReference>
<dbReference type="GO" id="GO:0008710">
    <property type="term" value="F:8-amino-7-oxononanoate synthase activity"/>
    <property type="evidence" value="ECO:0007669"/>
    <property type="project" value="UniProtKB-EC"/>
</dbReference>
<dbReference type="GO" id="GO:0030170">
    <property type="term" value="F:pyridoxal phosphate binding"/>
    <property type="evidence" value="ECO:0007669"/>
    <property type="project" value="InterPro"/>
</dbReference>
<dbReference type="GO" id="GO:0009102">
    <property type="term" value="P:biotin biosynthetic process"/>
    <property type="evidence" value="ECO:0007669"/>
    <property type="project" value="UniProtKB-UniPathway"/>
</dbReference>
<dbReference type="CDD" id="cd06454">
    <property type="entry name" value="KBL_like"/>
    <property type="match status" value="1"/>
</dbReference>
<dbReference type="FunFam" id="3.40.640.10:FF:000006">
    <property type="entry name" value="5-aminolevulinate synthase, mitochondrial"/>
    <property type="match status" value="1"/>
</dbReference>
<dbReference type="Gene3D" id="3.90.1150.10">
    <property type="entry name" value="Aspartate Aminotransferase, domain 1"/>
    <property type="match status" value="1"/>
</dbReference>
<dbReference type="Gene3D" id="3.40.640.10">
    <property type="entry name" value="Type I PLP-dependent aspartate aminotransferase-like (Major domain)"/>
    <property type="match status" value="1"/>
</dbReference>
<dbReference type="InterPro" id="IPR001917">
    <property type="entry name" value="Aminotrans_II_pyridoxalP_BS"/>
</dbReference>
<dbReference type="InterPro" id="IPR004839">
    <property type="entry name" value="Aminotransferase_I/II_large"/>
</dbReference>
<dbReference type="InterPro" id="IPR050087">
    <property type="entry name" value="AON_synthase_class-II"/>
</dbReference>
<dbReference type="InterPro" id="IPR004723">
    <property type="entry name" value="AONS_Archaea/Proteobacteria"/>
</dbReference>
<dbReference type="InterPro" id="IPR015424">
    <property type="entry name" value="PyrdxlP-dep_Trfase"/>
</dbReference>
<dbReference type="InterPro" id="IPR015421">
    <property type="entry name" value="PyrdxlP-dep_Trfase_major"/>
</dbReference>
<dbReference type="InterPro" id="IPR015422">
    <property type="entry name" value="PyrdxlP-dep_Trfase_small"/>
</dbReference>
<dbReference type="NCBIfam" id="TIGR00858">
    <property type="entry name" value="bioF"/>
    <property type="match status" value="1"/>
</dbReference>
<dbReference type="PANTHER" id="PTHR13693">
    <property type="entry name" value="CLASS II AMINOTRANSFERASE/8-AMINO-7-OXONONANOATE SYNTHASE"/>
    <property type="match status" value="1"/>
</dbReference>
<dbReference type="PANTHER" id="PTHR13693:SF3">
    <property type="entry name" value="LD36009P"/>
    <property type="match status" value="1"/>
</dbReference>
<dbReference type="Pfam" id="PF00155">
    <property type="entry name" value="Aminotran_1_2"/>
    <property type="match status" value="1"/>
</dbReference>
<dbReference type="SUPFAM" id="SSF53383">
    <property type="entry name" value="PLP-dependent transferases"/>
    <property type="match status" value="1"/>
</dbReference>
<dbReference type="PROSITE" id="PS00599">
    <property type="entry name" value="AA_TRANSFER_CLASS_2"/>
    <property type="match status" value="1"/>
</dbReference>